<dbReference type="EMBL" id="U00096">
    <property type="protein sequence ID" value="UMR55118.1"/>
    <property type="molecule type" value="Genomic_DNA"/>
</dbReference>
<dbReference type="InParanoid" id="P0DV20"/>
<dbReference type="BioCyc" id="EcoCyc:MONOMER0-4552"/>
<dbReference type="Proteomes" id="UP000000625">
    <property type="component" value="Chromosome"/>
</dbReference>
<feature type="chain" id="PRO_0000454741" description="Protein YtcB">
    <location>
        <begin position="1"/>
        <end position="18"/>
    </location>
</feature>
<sequence>MHLQLIKDNIHSVVICYT</sequence>
<name>YTCB_ECOLI</name>
<reference key="1">
    <citation type="journal article" date="1997" name="Science">
        <title>The complete genome sequence of Escherichia coli K-12.</title>
        <authorList>
            <person name="Blattner F.R."/>
            <person name="Plunkett G. III"/>
            <person name="Bloch C.A."/>
            <person name="Perna N.T."/>
            <person name="Burland V."/>
            <person name="Riley M."/>
            <person name="Collado-Vides J."/>
            <person name="Glasner J.D."/>
            <person name="Rode C.K."/>
            <person name="Mayhew G.F."/>
            <person name="Gregor J."/>
            <person name="Davis N.W."/>
            <person name="Kirkpatrick H.A."/>
            <person name="Goeden M.A."/>
            <person name="Rose D.J."/>
            <person name="Mau B."/>
            <person name="Shao Y."/>
        </authorList>
    </citation>
    <scope>NUCLEOTIDE SEQUENCE [LARGE SCALE GENOMIC DNA]</scope>
    <source>
        <strain>K12 / MG1655 / ATCC 47076</strain>
    </source>
</reference>
<reference key="2">
    <citation type="journal article" date="2022" name="J. Bacteriol.">
        <title>Identification of novel translated small ORFs in Escherichia coli using complementary ribosome profiling approaches.</title>
        <authorList>
            <person name="Stringer A."/>
            <person name="Smith C."/>
            <person name="Mangano K."/>
            <person name="Wade J.T."/>
        </authorList>
    </citation>
    <scope>IDENTIFICATION</scope>
    <source>
        <strain>K12 / MG1655 / ATCC 47076</strain>
    </source>
</reference>
<comment type="induction">
    <text evidence="1">Identified when cells are grown in rich medium (at protein level).</text>
</comment>
<protein>
    <recommendedName>
        <fullName evidence="2">Protein YtcB</fullName>
    </recommendedName>
</protein>
<gene>
    <name evidence="2" type="primary">ytcB</name>
    <name evidence="3" type="ordered locus">b4821</name>
</gene>
<organism>
    <name type="scientific">Escherichia coli (strain K12)</name>
    <dbReference type="NCBI Taxonomy" id="83333"/>
    <lineage>
        <taxon>Bacteria</taxon>
        <taxon>Pseudomonadati</taxon>
        <taxon>Pseudomonadota</taxon>
        <taxon>Gammaproteobacteria</taxon>
        <taxon>Enterobacterales</taxon>
        <taxon>Enterobacteriaceae</taxon>
        <taxon>Escherichia</taxon>
    </lineage>
</organism>
<proteinExistence type="evidence at protein level"/>
<keyword id="KW-1185">Reference proteome</keyword>
<accession>P0DV20</accession>
<evidence type="ECO:0000269" key="1">
    <source>
    </source>
</evidence>
<evidence type="ECO:0000303" key="2">
    <source>
    </source>
</evidence>
<evidence type="ECO:0000312" key="3">
    <source>
        <dbReference type="EMBL" id="UMR55118.1"/>
    </source>
</evidence>